<proteinExistence type="inferred from homology"/>
<gene>
    <name evidence="1" type="primary">aroA</name>
    <name type="ordered locus">SG0991</name>
</gene>
<protein>
    <recommendedName>
        <fullName evidence="1">3-phosphoshikimate 1-carboxyvinyltransferase</fullName>
        <ecNumber evidence="1">2.5.1.19</ecNumber>
    </recommendedName>
    <alternativeName>
        <fullName evidence="1">5-enolpyruvylshikimate-3-phosphate synthase</fullName>
        <shortName evidence="1">EPSP synthase</shortName>
        <shortName evidence="1">EPSPS</shortName>
    </alternativeName>
</protein>
<organism>
    <name type="scientific">Sodalis glossinidius (strain morsitans)</name>
    <dbReference type="NCBI Taxonomy" id="343509"/>
    <lineage>
        <taxon>Bacteria</taxon>
        <taxon>Pseudomonadati</taxon>
        <taxon>Pseudomonadota</taxon>
        <taxon>Gammaproteobacteria</taxon>
        <taxon>Enterobacterales</taxon>
        <taxon>Bruguierivoracaceae</taxon>
        <taxon>Sodalis</taxon>
    </lineage>
</organism>
<sequence>MQDSLTLNPIARVDGTLNLPGSKSVSNRALLLAAQANGTTRLTNLLDSDDVRHMLTALGQLGVNYRLSADRRSCEIDGLGGPLRADEALTLFLGNAGTAMRPLAAALCLQAQDVTLTGEPRMKERPIGHLVDALRQGGAQIDYLEHEHYPPLRLRGGYQGGDITVDGSVSSQFLTALLMMAPLAPQNSCIRIKGELVSRPYIDITLALMKSFGIEVRHDNYQVFYLTGGSVYRSPGEYLVEGDASSASYFLAAAAIRGGTVRVTGIGRHSVQGDIRFADVLESMGATIRWGNDYIECSRASLHTIDMDMNHIPDAAMTIATTALFASGGTTTLRNIANWRVKETDRLTAMATELRKVGATVIEGEDYLTVTPSARLSAARIGTYNDHRMAMCFALVALSDTPVTILDPQCTHKTFPDFFARLSALSTPASPHSAP</sequence>
<name>AROA_SODGM</name>
<feature type="chain" id="PRO_1000012483" description="3-phosphoshikimate 1-carboxyvinyltransferase">
    <location>
        <begin position="1"/>
        <end position="435"/>
    </location>
</feature>
<feature type="active site" description="Proton acceptor" evidence="1">
    <location>
        <position position="314"/>
    </location>
</feature>
<feature type="binding site" evidence="1">
    <location>
        <position position="23"/>
    </location>
    <ligand>
        <name>3-phosphoshikimate</name>
        <dbReference type="ChEBI" id="CHEBI:145989"/>
    </ligand>
</feature>
<feature type="binding site" evidence="1">
    <location>
        <position position="23"/>
    </location>
    <ligand>
        <name>phosphoenolpyruvate</name>
        <dbReference type="ChEBI" id="CHEBI:58702"/>
    </ligand>
</feature>
<feature type="binding site" evidence="1">
    <location>
        <position position="24"/>
    </location>
    <ligand>
        <name>3-phosphoshikimate</name>
        <dbReference type="ChEBI" id="CHEBI:145989"/>
    </ligand>
</feature>
<feature type="binding site" evidence="1">
    <location>
        <position position="28"/>
    </location>
    <ligand>
        <name>3-phosphoshikimate</name>
        <dbReference type="ChEBI" id="CHEBI:145989"/>
    </ligand>
</feature>
<feature type="binding site" evidence="1">
    <location>
        <position position="97"/>
    </location>
    <ligand>
        <name>phosphoenolpyruvate</name>
        <dbReference type="ChEBI" id="CHEBI:58702"/>
    </ligand>
</feature>
<feature type="binding site" evidence="1">
    <location>
        <position position="125"/>
    </location>
    <ligand>
        <name>phosphoenolpyruvate</name>
        <dbReference type="ChEBI" id="CHEBI:58702"/>
    </ligand>
</feature>
<feature type="binding site" evidence="1">
    <location>
        <position position="170"/>
    </location>
    <ligand>
        <name>3-phosphoshikimate</name>
        <dbReference type="ChEBI" id="CHEBI:145989"/>
    </ligand>
</feature>
<feature type="binding site" evidence="1">
    <location>
        <position position="171"/>
    </location>
    <ligand>
        <name>3-phosphoshikimate</name>
        <dbReference type="ChEBI" id="CHEBI:145989"/>
    </ligand>
</feature>
<feature type="binding site" evidence="1">
    <location>
        <position position="172"/>
    </location>
    <ligand>
        <name>3-phosphoshikimate</name>
        <dbReference type="ChEBI" id="CHEBI:145989"/>
    </ligand>
</feature>
<feature type="binding site" evidence="1">
    <location>
        <position position="172"/>
    </location>
    <ligand>
        <name>phosphoenolpyruvate</name>
        <dbReference type="ChEBI" id="CHEBI:58702"/>
    </ligand>
</feature>
<feature type="binding site" evidence="1">
    <location>
        <position position="198"/>
    </location>
    <ligand>
        <name>3-phosphoshikimate</name>
        <dbReference type="ChEBI" id="CHEBI:145989"/>
    </ligand>
</feature>
<feature type="binding site" evidence="1">
    <location>
        <position position="314"/>
    </location>
    <ligand>
        <name>3-phosphoshikimate</name>
        <dbReference type="ChEBI" id="CHEBI:145989"/>
    </ligand>
</feature>
<feature type="binding site" evidence="1">
    <location>
        <position position="338"/>
    </location>
    <ligand>
        <name>3-phosphoshikimate</name>
        <dbReference type="ChEBI" id="CHEBI:145989"/>
    </ligand>
</feature>
<feature type="binding site" evidence="1">
    <location>
        <position position="342"/>
    </location>
    <ligand>
        <name>3-phosphoshikimate</name>
        <dbReference type="ChEBI" id="CHEBI:145989"/>
    </ligand>
</feature>
<feature type="binding site" evidence="1">
    <location>
        <position position="346"/>
    </location>
    <ligand>
        <name>phosphoenolpyruvate</name>
        <dbReference type="ChEBI" id="CHEBI:58702"/>
    </ligand>
</feature>
<feature type="binding site" evidence="1">
    <location>
        <position position="388"/>
    </location>
    <ligand>
        <name>phosphoenolpyruvate</name>
        <dbReference type="ChEBI" id="CHEBI:58702"/>
    </ligand>
</feature>
<feature type="binding site" evidence="1">
    <location>
        <position position="413"/>
    </location>
    <ligand>
        <name>phosphoenolpyruvate</name>
        <dbReference type="ChEBI" id="CHEBI:58702"/>
    </ligand>
</feature>
<dbReference type="EC" id="2.5.1.19" evidence="1"/>
<dbReference type="EMBL" id="AP008232">
    <property type="protein sequence ID" value="BAE74266.1"/>
    <property type="molecule type" value="Genomic_DNA"/>
</dbReference>
<dbReference type="RefSeq" id="WP_011410852.1">
    <property type="nucleotide sequence ID" value="NC_007712.1"/>
</dbReference>
<dbReference type="SMR" id="Q2NUA9"/>
<dbReference type="STRING" id="343509.SG0991"/>
<dbReference type="KEGG" id="sgl:SG0991"/>
<dbReference type="eggNOG" id="COG0128">
    <property type="taxonomic scope" value="Bacteria"/>
</dbReference>
<dbReference type="HOGENOM" id="CLU_024321_0_0_6"/>
<dbReference type="OrthoDB" id="9809920at2"/>
<dbReference type="BioCyc" id="SGLO343509:SGP1_RS08475-MONOMER"/>
<dbReference type="UniPathway" id="UPA00053">
    <property type="reaction ID" value="UER00089"/>
</dbReference>
<dbReference type="Proteomes" id="UP000001932">
    <property type="component" value="Chromosome"/>
</dbReference>
<dbReference type="GO" id="GO:0005737">
    <property type="term" value="C:cytoplasm"/>
    <property type="evidence" value="ECO:0007669"/>
    <property type="project" value="UniProtKB-SubCell"/>
</dbReference>
<dbReference type="GO" id="GO:0003866">
    <property type="term" value="F:3-phosphoshikimate 1-carboxyvinyltransferase activity"/>
    <property type="evidence" value="ECO:0007669"/>
    <property type="project" value="UniProtKB-UniRule"/>
</dbReference>
<dbReference type="GO" id="GO:0008652">
    <property type="term" value="P:amino acid biosynthetic process"/>
    <property type="evidence" value="ECO:0007669"/>
    <property type="project" value="UniProtKB-KW"/>
</dbReference>
<dbReference type="GO" id="GO:0009073">
    <property type="term" value="P:aromatic amino acid family biosynthetic process"/>
    <property type="evidence" value="ECO:0007669"/>
    <property type="project" value="UniProtKB-KW"/>
</dbReference>
<dbReference type="GO" id="GO:0009423">
    <property type="term" value="P:chorismate biosynthetic process"/>
    <property type="evidence" value="ECO:0007669"/>
    <property type="project" value="UniProtKB-UniRule"/>
</dbReference>
<dbReference type="CDD" id="cd01556">
    <property type="entry name" value="EPSP_synthase"/>
    <property type="match status" value="1"/>
</dbReference>
<dbReference type="FunFam" id="3.65.10.10:FF:000003">
    <property type="entry name" value="3-phosphoshikimate 1-carboxyvinyltransferase"/>
    <property type="match status" value="1"/>
</dbReference>
<dbReference type="FunFam" id="3.65.10.10:FF:000004">
    <property type="entry name" value="3-phosphoshikimate 1-carboxyvinyltransferase"/>
    <property type="match status" value="1"/>
</dbReference>
<dbReference type="Gene3D" id="3.65.10.10">
    <property type="entry name" value="Enolpyruvate transferase domain"/>
    <property type="match status" value="2"/>
</dbReference>
<dbReference type="HAMAP" id="MF_00210">
    <property type="entry name" value="EPSP_synth"/>
    <property type="match status" value="1"/>
</dbReference>
<dbReference type="InterPro" id="IPR001986">
    <property type="entry name" value="Enolpyruvate_Tfrase_dom"/>
</dbReference>
<dbReference type="InterPro" id="IPR036968">
    <property type="entry name" value="Enolpyruvate_Tfrase_sf"/>
</dbReference>
<dbReference type="InterPro" id="IPR006264">
    <property type="entry name" value="EPSP_synthase"/>
</dbReference>
<dbReference type="InterPro" id="IPR023193">
    <property type="entry name" value="EPSP_synthase_CS"/>
</dbReference>
<dbReference type="InterPro" id="IPR013792">
    <property type="entry name" value="RNA3'P_cycl/enolpyr_Trfase_a/b"/>
</dbReference>
<dbReference type="NCBIfam" id="TIGR01356">
    <property type="entry name" value="aroA"/>
    <property type="match status" value="1"/>
</dbReference>
<dbReference type="PANTHER" id="PTHR21090">
    <property type="entry name" value="AROM/DEHYDROQUINATE SYNTHASE"/>
    <property type="match status" value="1"/>
</dbReference>
<dbReference type="PANTHER" id="PTHR21090:SF5">
    <property type="entry name" value="PENTAFUNCTIONAL AROM POLYPEPTIDE"/>
    <property type="match status" value="1"/>
</dbReference>
<dbReference type="Pfam" id="PF00275">
    <property type="entry name" value="EPSP_synthase"/>
    <property type="match status" value="1"/>
</dbReference>
<dbReference type="PIRSF" id="PIRSF000505">
    <property type="entry name" value="EPSPS"/>
    <property type="match status" value="1"/>
</dbReference>
<dbReference type="SUPFAM" id="SSF55205">
    <property type="entry name" value="EPT/RTPC-like"/>
    <property type="match status" value="1"/>
</dbReference>
<dbReference type="PROSITE" id="PS00104">
    <property type="entry name" value="EPSP_SYNTHASE_1"/>
    <property type="match status" value="1"/>
</dbReference>
<dbReference type="PROSITE" id="PS00885">
    <property type="entry name" value="EPSP_SYNTHASE_2"/>
    <property type="match status" value="1"/>
</dbReference>
<evidence type="ECO:0000255" key="1">
    <source>
        <dbReference type="HAMAP-Rule" id="MF_00210"/>
    </source>
</evidence>
<accession>Q2NUA9</accession>
<comment type="function">
    <text evidence="1">Catalyzes the transfer of the enolpyruvyl moiety of phosphoenolpyruvate (PEP) to the 5-hydroxyl of shikimate-3-phosphate (S3P) to produce enolpyruvyl shikimate-3-phosphate and inorganic phosphate.</text>
</comment>
<comment type="catalytic activity">
    <reaction evidence="1">
        <text>3-phosphoshikimate + phosphoenolpyruvate = 5-O-(1-carboxyvinyl)-3-phosphoshikimate + phosphate</text>
        <dbReference type="Rhea" id="RHEA:21256"/>
        <dbReference type="ChEBI" id="CHEBI:43474"/>
        <dbReference type="ChEBI" id="CHEBI:57701"/>
        <dbReference type="ChEBI" id="CHEBI:58702"/>
        <dbReference type="ChEBI" id="CHEBI:145989"/>
        <dbReference type="EC" id="2.5.1.19"/>
    </reaction>
    <physiologicalReaction direction="left-to-right" evidence="1">
        <dbReference type="Rhea" id="RHEA:21257"/>
    </physiologicalReaction>
</comment>
<comment type="pathway">
    <text evidence="1">Metabolic intermediate biosynthesis; chorismate biosynthesis; chorismate from D-erythrose 4-phosphate and phosphoenolpyruvate: step 6/7.</text>
</comment>
<comment type="subunit">
    <text evidence="1">Monomer.</text>
</comment>
<comment type="subcellular location">
    <subcellularLocation>
        <location evidence="1">Cytoplasm</location>
    </subcellularLocation>
</comment>
<comment type="similarity">
    <text evidence="1">Belongs to the EPSP synthase family.</text>
</comment>
<reference key="1">
    <citation type="journal article" date="2006" name="Genome Res.">
        <title>Massive genome erosion and functional adaptations provide insights into the symbiotic lifestyle of Sodalis glossinidius in the tsetse host.</title>
        <authorList>
            <person name="Toh H."/>
            <person name="Weiss B.L."/>
            <person name="Perkin S.A.H."/>
            <person name="Yamashita A."/>
            <person name="Oshima K."/>
            <person name="Hattori M."/>
            <person name="Aksoy S."/>
        </authorList>
    </citation>
    <scope>NUCLEOTIDE SEQUENCE [LARGE SCALE GENOMIC DNA]</scope>
    <source>
        <strain>morsitans</strain>
    </source>
</reference>
<keyword id="KW-0028">Amino-acid biosynthesis</keyword>
<keyword id="KW-0057">Aromatic amino acid biosynthesis</keyword>
<keyword id="KW-0963">Cytoplasm</keyword>
<keyword id="KW-0808">Transferase</keyword>